<evidence type="ECO:0000250" key="1">
    <source>
        <dbReference type="UniProtKB" id="P82619"/>
    </source>
</evidence>
<evidence type="ECO:0000255" key="2"/>
<evidence type="ECO:0000269" key="3">
    <source>
    </source>
</evidence>
<evidence type="ECO:0000305" key="4"/>
<comment type="function">
    <text evidence="1">Mediates visceral muscle contractile activity (myotropic activity).</text>
</comment>
<comment type="subcellular location">
    <subcellularLocation>
        <location evidence="4">Secreted</location>
    </subcellularLocation>
</comment>
<comment type="mass spectrometry"/>
<comment type="similarity">
    <text evidence="2">Belongs to the pyrokinin family.</text>
</comment>
<dbReference type="GO" id="GO:0005576">
    <property type="term" value="C:extracellular region"/>
    <property type="evidence" value="ECO:0007669"/>
    <property type="project" value="UniProtKB-SubCell"/>
</dbReference>
<dbReference type="GO" id="GO:0007218">
    <property type="term" value="P:neuropeptide signaling pathway"/>
    <property type="evidence" value="ECO:0007669"/>
    <property type="project" value="UniProtKB-KW"/>
</dbReference>
<name>PPK4_NEORO</name>
<feature type="peptide" id="PRO_0000044331" description="Pyrokinin-4">
    <location>
        <begin position="1"/>
        <end position="12"/>
    </location>
</feature>
<feature type="modified residue" description="Leucine amide" evidence="3">
    <location>
        <position position="12"/>
    </location>
</feature>
<protein>
    <recommendedName>
        <fullName>Pyrokinin-4</fullName>
    </recommendedName>
    <alternativeName>
        <fullName>YXPRL-amide</fullName>
    </alternativeName>
</protein>
<sequence>DHLPHDVYSPRL</sequence>
<organism>
    <name type="scientific">Neostylopyga rhombifolia</name>
    <name type="common">Harlequin cockroach</name>
    <dbReference type="NCBI Taxonomy" id="304879"/>
    <lineage>
        <taxon>Eukaryota</taxon>
        <taxon>Metazoa</taxon>
        <taxon>Ecdysozoa</taxon>
        <taxon>Arthropoda</taxon>
        <taxon>Hexapoda</taxon>
        <taxon>Insecta</taxon>
        <taxon>Pterygota</taxon>
        <taxon>Neoptera</taxon>
        <taxon>Polyneoptera</taxon>
        <taxon>Dictyoptera</taxon>
        <taxon>Blattodea</taxon>
        <taxon>Blattoidea</taxon>
        <taxon>Blattidae</taxon>
        <taxon>Blattinae</taxon>
        <taxon>Neostylopyga</taxon>
    </lineage>
</organism>
<keyword id="KW-0027">Amidation</keyword>
<keyword id="KW-0903">Direct protein sequencing</keyword>
<keyword id="KW-0527">Neuropeptide</keyword>
<keyword id="KW-0964">Secreted</keyword>
<accession>P84412</accession>
<reference evidence="4" key="1">
    <citation type="journal article" date="2005" name="Peptides">
        <title>Peptidomics of neurohemal organs from species of the cockroach family Blattidae: how do neuropeptides of closely related species differ?</title>
        <authorList>
            <person name="Predel R."/>
            <person name="Gaede G."/>
        </authorList>
    </citation>
    <scope>PROTEIN SEQUENCE</scope>
    <scope>MASS SPECTROMETRY</scope>
    <scope>AMIDATION AT LEU-12</scope>
    <source>
        <tissue evidence="3">Corpora allata</tissue>
    </source>
</reference>
<proteinExistence type="evidence at protein level"/>